<comment type="function">
    <text evidence="1">Acts as a regulator of the electron transfer flavoprotein by promoting the removal of flavin from the ETF holoenzyme (composed of ETFA and ETFB).</text>
</comment>
<comment type="subcellular location">
    <subcellularLocation>
        <location evidence="1">Mitochondrion</location>
    </subcellularLocation>
</comment>
<comment type="similarity">
    <text evidence="2">Belongs to the complex I LYR family.</text>
</comment>
<protein>
    <recommendedName>
        <fullName evidence="1">Electron transfer flavoprotein regulatory factor 1</fullName>
    </recommendedName>
    <alternativeName>
        <fullName evidence="1">LYR motif-containing protein 5</fullName>
    </alternativeName>
</protein>
<dbReference type="EMBL" id="DQ213190">
    <property type="protein sequence ID" value="ACH43661.1"/>
    <property type="molecule type" value="mRNA"/>
</dbReference>
<dbReference type="RefSeq" id="NP_001232130.1">
    <property type="nucleotide sequence ID" value="NM_001245201.2"/>
</dbReference>
<dbReference type="SMR" id="B5FXA0"/>
<dbReference type="FunCoup" id="B5FXA0">
    <property type="interactions" value="53"/>
</dbReference>
<dbReference type="GeneID" id="100189977"/>
<dbReference type="KEGG" id="tgu:100189977"/>
<dbReference type="CTD" id="144363"/>
<dbReference type="InParanoid" id="B5FXA0"/>
<dbReference type="OrthoDB" id="10258445at2759"/>
<dbReference type="Proteomes" id="UP000007754">
    <property type="component" value="Unplaced"/>
</dbReference>
<dbReference type="GO" id="GO:0005739">
    <property type="term" value="C:mitochondrion"/>
    <property type="evidence" value="ECO:0000250"/>
    <property type="project" value="UniProtKB"/>
</dbReference>
<dbReference type="GO" id="GO:0090324">
    <property type="term" value="P:negative regulation of oxidative phosphorylation"/>
    <property type="evidence" value="ECO:0007669"/>
    <property type="project" value="InterPro"/>
</dbReference>
<dbReference type="GO" id="GO:0022904">
    <property type="term" value="P:respiratory electron transport chain"/>
    <property type="evidence" value="ECO:0000250"/>
    <property type="project" value="UniProtKB"/>
</dbReference>
<dbReference type="CDD" id="cd20265">
    <property type="entry name" value="Complex1_LYR_ETFRF1_LYRM5"/>
    <property type="match status" value="1"/>
</dbReference>
<dbReference type="InterPro" id="IPR008011">
    <property type="entry name" value="Complex1_LYR_dom"/>
</dbReference>
<dbReference type="InterPro" id="IPR045296">
    <property type="entry name" value="Complex1_LYR_ETFRF1_LYRM5"/>
</dbReference>
<dbReference type="InterPro" id="IPR052000">
    <property type="entry name" value="ETFRF1"/>
</dbReference>
<dbReference type="PANTHER" id="PTHR21024:SF0">
    <property type="entry name" value="ELECTRON TRANSFER FLAVOPROTEIN REGULATORY FACTOR 1"/>
    <property type="match status" value="1"/>
</dbReference>
<dbReference type="PANTHER" id="PTHR21024">
    <property type="entry name" value="GROWTH HORMONE-INDUCIBLE SOLUBLE PROTEIN-RELATED"/>
    <property type="match status" value="1"/>
</dbReference>
<dbReference type="Pfam" id="PF05347">
    <property type="entry name" value="Complex1_LYR"/>
    <property type="match status" value="1"/>
</dbReference>
<reference key="1">
    <citation type="journal article" date="2006" name="Proc. Natl. Acad. Sci. U.S.A.">
        <title>A molecular neuroethological approach for identifying and characterizing a cascade of behaviorally regulated genes.</title>
        <authorList>
            <person name="Wada K."/>
            <person name="Howard J.T."/>
            <person name="McConnell P."/>
            <person name="Whitney O."/>
            <person name="Lints T."/>
            <person name="Rivas M.V."/>
            <person name="Horita H."/>
            <person name="Patterson M.A."/>
            <person name="White S.A."/>
            <person name="Scharff C."/>
            <person name="Haesler S."/>
            <person name="Zhao S."/>
            <person name="Sakaguchi H."/>
            <person name="Hagiwara M."/>
            <person name="Shiraki T."/>
            <person name="Hirozane-Kishikawa T."/>
            <person name="Skene P."/>
            <person name="Hayashizaki Y."/>
            <person name="Carninci P."/>
            <person name="Jarvis E.D."/>
        </authorList>
    </citation>
    <scope>NUCLEOTIDE SEQUENCE [LARGE SCALE MRNA]</scope>
    <source>
        <tissue>Brain</tissue>
    </source>
</reference>
<proteinExistence type="inferred from homology"/>
<feature type="chain" id="PRO_0000370336" description="Electron transfer flavoprotein regulatory factor 1">
    <location>
        <begin position="1"/>
        <end position="86"/>
    </location>
</feature>
<keyword id="KW-0496">Mitochondrion</keyword>
<keyword id="KW-1185">Reference proteome</keyword>
<accession>B5FXA0</accession>
<organism>
    <name type="scientific">Taeniopygia guttata</name>
    <name type="common">Zebra finch</name>
    <name type="synonym">Poephila guttata</name>
    <dbReference type="NCBI Taxonomy" id="59729"/>
    <lineage>
        <taxon>Eukaryota</taxon>
        <taxon>Metazoa</taxon>
        <taxon>Chordata</taxon>
        <taxon>Craniata</taxon>
        <taxon>Vertebrata</taxon>
        <taxon>Euteleostomi</taxon>
        <taxon>Archelosauria</taxon>
        <taxon>Archosauria</taxon>
        <taxon>Dinosauria</taxon>
        <taxon>Saurischia</taxon>
        <taxon>Theropoda</taxon>
        <taxon>Coelurosauria</taxon>
        <taxon>Aves</taxon>
        <taxon>Neognathae</taxon>
        <taxon>Neoaves</taxon>
        <taxon>Telluraves</taxon>
        <taxon>Australaves</taxon>
        <taxon>Passeriformes</taxon>
        <taxon>Passeroidea</taxon>
        <taxon>Estrildidae</taxon>
        <taxon>Estrildinae</taxon>
        <taxon>Taeniopygia</taxon>
    </lineage>
</organism>
<evidence type="ECO:0000250" key="1">
    <source>
        <dbReference type="UniProtKB" id="Q6IPR1"/>
    </source>
</evidence>
<evidence type="ECO:0000305" key="2"/>
<gene>
    <name evidence="1" type="primary">etfrf1</name>
    <name evidence="1" type="synonym">LYRM5</name>
</gene>
<sequence length="86" mass="10414">MANSLRSEVIKLYKNLLYLGREYPKGADYFRRRLKAAFLKNKDETDPEKIKQLIARGEFVIKELEALYFLRKYRAMKKRYYSDDKP</sequence>
<name>ETFR1_TAEGU</name>